<dbReference type="EC" id="3.4.24.-"/>
<dbReference type="SMR" id="P0DM87"/>
<dbReference type="GO" id="GO:0005576">
    <property type="term" value="C:extracellular region"/>
    <property type="evidence" value="ECO:0007669"/>
    <property type="project" value="UniProtKB-SubCell"/>
</dbReference>
<dbReference type="GO" id="GO:0005886">
    <property type="term" value="C:plasma membrane"/>
    <property type="evidence" value="ECO:0007669"/>
    <property type="project" value="TreeGrafter"/>
</dbReference>
<dbReference type="GO" id="GO:0046872">
    <property type="term" value="F:metal ion binding"/>
    <property type="evidence" value="ECO:0007669"/>
    <property type="project" value="UniProtKB-KW"/>
</dbReference>
<dbReference type="GO" id="GO:0004222">
    <property type="term" value="F:metalloendopeptidase activity"/>
    <property type="evidence" value="ECO:0007669"/>
    <property type="project" value="InterPro"/>
</dbReference>
<dbReference type="GO" id="GO:0090729">
    <property type="term" value="F:toxin activity"/>
    <property type="evidence" value="ECO:0007669"/>
    <property type="project" value="UniProtKB-KW"/>
</dbReference>
<dbReference type="GO" id="GO:0006508">
    <property type="term" value="P:proteolysis"/>
    <property type="evidence" value="ECO:0007669"/>
    <property type="project" value="UniProtKB-KW"/>
</dbReference>
<dbReference type="CDD" id="cd04269">
    <property type="entry name" value="ZnMc_adamalysin_II_like"/>
    <property type="match status" value="1"/>
</dbReference>
<dbReference type="FunFam" id="4.10.70.10:FF:000003">
    <property type="entry name" value="Disintegrin and metalloproteinase domain-containing protein 17"/>
    <property type="match status" value="1"/>
</dbReference>
<dbReference type="FunFam" id="3.40.390.10:FF:000002">
    <property type="entry name" value="Disintegrin and metalloproteinase domain-containing protein 22"/>
    <property type="match status" value="1"/>
</dbReference>
<dbReference type="Gene3D" id="3.40.390.10">
    <property type="entry name" value="Collagenase (Catalytic Domain)"/>
    <property type="match status" value="1"/>
</dbReference>
<dbReference type="Gene3D" id="4.10.70.10">
    <property type="entry name" value="Disintegrin domain"/>
    <property type="match status" value="1"/>
</dbReference>
<dbReference type="InterPro" id="IPR018358">
    <property type="entry name" value="Disintegrin_CS"/>
</dbReference>
<dbReference type="InterPro" id="IPR001762">
    <property type="entry name" value="Disintegrin_dom"/>
</dbReference>
<dbReference type="InterPro" id="IPR036436">
    <property type="entry name" value="Disintegrin_dom_sf"/>
</dbReference>
<dbReference type="InterPro" id="IPR024079">
    <property type="entry name" value="MetalloPept_cat_dom_sf"/>
</dbReference>
<dbReference type="InterPro" id="IPR001590">
    <property type="entry name" value="Peptidase_M12B"/>
</dbReference>
<dbReference type="InterPro" id="IPR002870">
    <property type="entry name" value="Peptidase_M12B_N"/>
</dbReference>
<dbReference type="InterPro" id="IPR034027">
    <property type="entry name" value="Reprolysin_adamalysin"/>
</dbReference>
<dbReference type="PANTHER" id="PTHR11905">
    <property type="entry name" value="ADAM A DISINTEGRIN AND METALLOPROTEASE DOMAIN"/>
    <property type="match status" value="1"/>
</dbReference>
<dbReference type="PANTHER" id="PTHR11905:SF32">
    <property type="entry name" value="DISINTEGRIN AND METALLOPROTEINASE DOMAIN-CONTAINING PROTEIN 28"/>
    <property type="match status" value="1"/>
</dbReference>
<dbReference type="Pfam" id="PF00200">
    <property type="entry name" value="Disintegrin"/>
    <property type="match status" value="1"/>
</dbReference>
<dbReference type="Pfam" id="PF01562">
    <property type="entry name" value="Pep_M12B_propep"/>
    <property type="match status" value="1"/>
</dbReference>
<dbReference type="Pfam" id="PF01421">
    <property type="entry name" value="Reprolysin"/>
    <property type="match status" value="1"/>
</dbReference>
<dbReference type="PRINTS" id="PR00289">
    <property type="entry name" value="DISINTEGRIN"/>
</dbReference>
<dbReference type="SMART" id="SM00050">
    <property type="entry name" value="DISIN"/>
    <property type="match status" value="1"/>
</dbReference>
<dbReference type="SUPFAM" id="SSF57552">
    <property type="entry name" value="Blood coagulation inhibitor (disintegrin)"/>
    <property type="match status" value="1"/>
</dbReference>
<dbReference type="SUPFAM" id="SSF55486">
    <property type="entry name" value="Metalloproteases ('zincins'), catalytic domain"/>
    <property type="match status" value="1"/>
</dbReference>
<dbReference type="PROSITE" id="PS50215">
    <property type="entry name" value="ADAM_MEPRO"/>
    <property type="match status" value="1"/>
</dbReference>
<dbReference type="PROSITE" id="PS00427">
    <property type="entry name" value="DISINTEGRIN_1"/>
    <property type="match status" value="1"/>
</dbReference>
<dbReference type="PROSITE" id="PS50214">
    <property type="entry name" value="DISINTEGRIN_2"/>
    <property type="match status" value="1"/>
</dbReference>
<protein>
    <recommendedName>
        <fullName>Zinc metalloproteinase-disintegrin stejnitin</fullName>
        <ecNumber>3.4.24.-</ecNumber>
    </recommendedName>
    <alternativeName>
        <fullName>Snake venom metalloproteinase</fullName>
        <shortName>SVMP</shortName>
    </alternativeName>
</protein>
<evidence type="ECO:0000250" key="1"/>
<evidence type="ECO:0000250" key="2">
    <source>
        <dbReference type="UniProtKB" id="Q0NZX5"/>
    </source>
</evidence>
<evidence type="ECO:0000255" key="3"/>
<evidence type="ECO:0000255" key="4">
    <source>
        <dbReference type="PROSITE-ProRule" id="PRU00068"/>
    </source>
</evidence>
<evidence type="ECO:0000255" key="5">
    <source>
        <dbReference type="PROSITE-ProRule" id="PRU00276"/>
    </source>
</evidence>
<evidence type="ECO:0000269" key="6">
    <source>
    </source>
</evidence>
<evidence type="ECO:0000305" key="7"/>
<evidence type="ECO:0000305" key="8">
    <source>
    </source>
</evidence>
<feature type="signal peptide" evidence="3">
    <location>
        <begin position="1"/>
        <end position="20"/>
    </location>
</feature>
<feature type="propeptide" id="PRO_0000424617" evidence="1">
    <location>
        <begin position="21"/>
        <end position="192"/>
    </location>
</feature>
<feature type="chain" id="PRO_0000424618" description="Zinc metalloproteinase-disintegrin stejnitin">
    <location>
        <begin position="193"/>
        <end position="484"/>
    </location>
</feature>
<feature type="domain" description="Peptidase M12B" evidence="5">
    <location>
        <begin position="194"/>
        <end position="392"/>
    </location>
</feature>
<feature type="domain" description="Disintegrin" evidence="4">
    <location>
        <begin position="400"/>
        <end position="484"/>
    </location>
</feature>
<feature type="short sequence motif" description="Cell attachment site" evidence="4">
    <location>
        <begin position="462"/>
        <end position="464"/>
    </location>
</feature>
<feature type="binding site" evidence="1">
    <location>
        <position position="197"/>
    </location>
    <ligand>
        <name>Ca(2+)</name>
        <dbReference type="ChEBI" id="CHEBI:29108"/>
        <label>1</label>
    </ligand>
</feature>
<feature type="binding site" evidence="1">
    <location>
        <position position="281"/>
    </location>
    <ligand>
        <name>Ca(2+)</name>
        <dbReference type="ChEBI" id="CHEBI:29108"/>
        <label>1</label>
    </ligand>
</feature>
<feature type="binding site" evidence="5">
    <location>
        <position position="330"/>
    </location>
    <ligand>
        <name>Zn(2+)</name>
        <dbReference type="ChEBI" id="CHEBI:29105"/>
        <note>catalytic</note>
    </ligand>
</feature>
<feature type="binding site" evidence="5">
    <location>
        <position position="334"/>
    </location>
    <ligand>
        <name>Zn(2+)</name>
        <dbReference type="ChEBI" id="CHEBI:29105"/>
        <note>catalytic</note>
    </ligand>
</feature>
<feature type="binding site" evidence="5">
    <location>
        <position position="340"/>
    </location>
    <ligand>
        <name>Zn(2+)</name>
        <dbReference type="ChEBI" id="CHEBI:29105"/>
        <note>catalytic</note>
    </ligand>
</feature>
<feature type="binding site" evidence="1">
    <location>
        <position position="387"/>
    </location>
    <ligand>
        <name>Ca(2+)</name>
        <dbReference type="ChEBI" id="CHEBI:29108"/>
        <label>1</label>
    </ligand>
</feature>
<feature type="binding site" evidence="1">
    <location>
        <position position="390"/>
    </location>
    <ligand>
        <name>Ca(2+)</name>
        <dbReference type="ChEBI" id="CHEBI:29108"/>
        <label>1</label>
    </ligand>
</feature>
<feature type="binding site" evidence="1">
    <location>
        <position position="402"/>
    </location>
    <ligand>
        <name>Ca(2+)</name>
        <dbReference type="ChEBI" id="CHEBI:29108"/>
        <label>2</label>
    </ligand>
</feature>
<feature type="binding site" evidence="1">
    <location>
        <position position="405"/>
    </location>
    <ligand>
        <name>Ca(2+)</name>
        <dbReference type="ChEBI" id="CHEBI:29108"/>
        <label>2</label>
    </ligand>
</feature>
<feature type="binding site" evidence="1">
    <location>
        <position position="409"/>
    </location>
    <ligand>
        <name>Ca(2+)</name>
        <dbReference type="ChEBI" id="CHEBI:29108"/>
        <label>2</label>
    </ligand>
</feature>
<feature type="binding site" evidence="1">
    <location>
        <position position="412"/>
    </location>
    <ligand>
        <name>Ca(2+)</name>
        <dbReference type="ChEBI" id="CHEBI:29108"/>
        <label>2</label>
    </ligand>
</feature>
<feature type="binding site" evidence="1">
    <location>
        <position position="415"/>
    </location>
    <ligand>
        <name>Ca(2+)</name>
        <dbReference type="ChEBI" id="CHEBI:29108"/>
        <label>2</label>
    </ligand>
</feature>
<feature type="modified residue" description="Pyrrolidone carboxylic acid" evidence="8">
    <location>
        <position position="193"/>
    </location>
</feature>
<feature type="glycosylation site" description="N-linked (GlcNAc...) asparagine" evidence="3">
    <location>
        <position position="254"/>
    </location>
</feature>
<feature type="disulfide bond" evidence="5">
    <location>
        <begin position="305"/>
        <end position="387"/>
    </location>
</feature>
<feature type="disulfide bond" evidence="5">
    <location>
        <begin position="345"/>
        <end position="369"/>
    </location>
</feature>
<feature type="disulfide bond" evidence="5">
    <location>
        <begin position="347"/>
        <end position="352"/>
    </location>
</feature>
<feature type="disulfide bond" evidence="7">
    <location>
        <begin position="403"/>
        <end position="422"/>
    </location>
</feature>
<feature type="disulfide bond" evidence="2">
    <location>
        <begin position="414"/>
        <end position="432"/>
    </location>
</feature>
<feature type="disulfide bond" evidence="2">
    <location>
        <begin position="416"/>
        <end position="427"/>
    </location>
</feature>
<feature type="disulfide bond" evidence="2">
    <location>
        <begin position="426"/>
        <end position="449"/>
    </location>
</feature>
<feature type="disulfide bond" evidence="2">
    <location>
        <begin position="440"/>
        <end position="446"/>
    </location>
</feature>
<feature type="disulfide bond" evidence="2">
    <location>
        <begin position="445"/>
        <end position="470"/>
    </location>
</feature>
<feature type="disulfide bond" evidence="2 4">
    <location>
        <begin position="458"/>
        <end position="477"/>
    </location>
</feature>
<keyword id="KW-0106">Calcium</keyword>
<keyword id="KW-1217">Cell adhesion impairing toxin</keyword>
<keyword id="KW-1015">Disulfide bond</keyword>
<keyword id="KW-0325">Glycoprotein</keyword>
<keyword id="KW-1199">Hemostasis impairing toxin</keyword>
<keyword id="KW-0378">Hydrolase</keyword>
<keyword id="KW-0479">Metal-binding</keyword>
<keyword id="KW-0482">Metalloprotease</keyword>
<keyword id="KW-1201">Platelet aggregation inhibiting toxin</keyword>
<keyword id="KW-0645">Protease</keyword>
<keyword id="KW-0873">Pyrrolidone carboxylic acid</keyword>
<keyword id="KW-0964">Secreted</keyword>
<keyword id="KW-0732">Signal</keyword>
<keyword id="KW-0800">Toxin</keyword>
<keyword id="KW-0862">Zinc</keyword>
<keyword id="KW-0865">Zymogen</keyword>
<reference key="1">
    <citation type="journal article" date="2007" name="Toxicon">
        <title>Isolation and characterization of a novel P-II class snake venom metalloproteinase from Trimeresurus stejnegeri.</title>
        <authorList>
            <person name="Han Y.P."/>
            <person name="Lu X.Y."/>
            <person name="Wang X.F."/>
            <person name="Xu J."/>
        </authorList>
    </citation>
    <scope>NUCLEOTIDE SEQUENCE [MRNA]</scope>
    <scope>PYROGLUTAMATE FORMATION AT GLN-193</scope>
    <scope>IDENTIFICATION BY MASS SPECTROMETRY</scope>
    <scope>FUNCTION</scope>
    <scope>SUBCELLULAR LOCATION</scope>
    <source>
        <tissue>Venom</tissue>
        <tissue>Venom gland</tissue>
    </source>
</reference>
<organism>
    <name type="scientific">Trimeresurus stejnegeri</name>
    <name type="common">Chinese green tree viper</name>
    <name type="synonym">Viridovipera stejnegeri</name>
    <dbReference type="NCBI Taxonomy" id="39682"/>
    <lineage>
        <taxon>Eukaryota</taxon>
        <taxon>Metazoa</taxon>
        <taxon>Chordata</taxon>
        <taxon>Craniata</taxon>
        <taxon>Vertebrata</taxon>
        <taxon>Euteleostomi</taxon>
        <taxon>Lepidosauria</taxon>
        <taxon>Squamata</taxon>
        <taxon>Bifurcata</taxon>
        <taxon>Unidentata</taxon>
        <taxon>Episquamata</taxon>
        <taxon>Toxicofera</taxon>
        <taxon>Serpentes</taxon>
        <taxon>Colubroidea</taxon>
        <taxon>Viperidae</taxon>
        <taxon>Crotalinae</taxon>
        <taxon>Trimeresurus</taxon>
    </lineage>
</organism>
<comment type="function">
    <text evidence="6">Snake venom zinc metalloproteinase that inhibits ADP-induced platelet aggregation in human platelet-rich plasma (IC(50) is 175 nM) and cleaves alpha-(FGA) and subsequently the beta-chain (FGG) of bovine fibrinogen, leaving the gamma-chain unaffected. It is also able to inhibit proliferatin of ECV304 cells by inducing apoptosis of these cells.</text>
</comment>
<comment type="cofactor">
    <cofactor evidence="1">
        <name>Zn(2+)</name>
        <dbReference type="ChEBI" id="CHEBI:29105"/>
    </cofactor>
    <text evidence="1">Binds 1 zinc ion per subunit.</text>
</comment>
<comment type="subcellular location">
    <subcellularLocation>
        <location evidence="6">Secreted</location>
    </subcellularLocation>
</comment>
<comment type="tissue specificity">
    <text evidence="8">Expressed by the venom gland.</text>
</comment>
<comment type="PTM">
    <text evidence="6">The N-terminus is blocked.</text>
</comment>
<comment type="miscellaneous">
    <text>The disintegrin domain belongs to the long disintegrin subfamily.</text>
</comment>
<comment type="similarity">
    <text evidence="7">Belongs to the venom metalloproteinase (M12B) family. P-II subfamily. P-IIb sub-subfamily.</text>
</comment>
<comment type="caution">
    <text evidence="7">This protein does not undergo proteolytic processing to release the disintegrin domain.</text>
</comment>
<accession>P0DM87</accession>
<proteinExistence type="evidence at protein level"/>
<name>VM2_TRIST</name>
<sequence>MIQVLLVTICLAVFPYQGNSIILESGNVNDYEVVYPRKVTALPKGAVQPKYEDAMQYEFKVNGEPVVLHLEKNKGLFSEDYSETHYSPDGREITTYPSVEDHCYYHGRIQNDADLTASISACNGLKGYFKLQGETYLIEPLKLPDSEAHAVFKYENVEKEDEAPKMCGVTETNWESDEPIKKASQLNLTPDEQRFIELVIVADHRMYTKYDGDETEISSKIYEIANDLNVIFRALYIHVALIGLEIWPSGELCNVTLSADDTLDSFAEWTKRDLQKRKRHDNAQLLTGMIFNEKIEGRAYKKTMCHWKRSVGIVRDHRTRPHFVANRMAHGLGHNLGINHDGDSCTCGANSCIMSATVSNDPSSRFSDCSLNQYSSDIIHNPYTSRCLYNGPWKTDIVSPPVCGNYYVEVGEDCDCGPPANCQNRCCDAATCRLTPGSQCAEGLCCEQCRFSTEGKLCREAKGDWNNDYCSGQSGDCPRNPFRA</sequence>